<dbReference type="EC" id="4.3.2.10" evidence="1"/>
<dbReference type="EMBL" id="CP000699">
    <property type="protein sequence ID" value="ABQ69076.1"/>
    <property type="molecule type" value="Genomic_DNA"/>
</dbReference>
<dbReference type="SMR" id="A5V9W0"/>
<dbReference type="STRING" id="392499.Swit_2720"/>
<dbReference type="PaxDb" id="392499-Swit_2720"/>
<dbReference type="KEGG" id="swi:Swit_2720"/>
<dbReference type="eggNOG" id="COG0107">
    <property type="taxonomic scope" value="Bacteria"/>
</dbReference>
<dbReference type="HOGENOM" id="CLU_048577_4_0_5"/>
<dbReference type="OrthoDB" id="9781903at2"/>
<dbReference type="UniPathway" id="UPA00031">
    <property type="reaction ID" value="UER00010"/>
</dbReference>
<dbReference type="Proteomes" id="UP000001989">
    <property type="component" value="Chromosome"/>
</dbReference>
<dbReference type="GO" id="GO:0005737">
    <property type="term" value="C:cytoplasm"/>
    <property type="evidence" value="ECO:0007669"/>
    <property type="project" value="UniProtKB-SubCell"/>
</dbReference>
<dbReference type="GO" id="GO:0000107">
    <property type="term" value="F:imidazoleglycerol-phosphate synthase activity"/>
    <property type="evidence" value="ECO:0007669"/>
    <property type="project" value="UniProtKB-UniRule"/>
</dbReference>
<dbReference type="GO" id="GO:0016829">
    <property type="term" value="F:lyase activity"/>
    <property type="evidence" value="ECO:0007669"/>
    <property type="project" value="UniProtKB-KW"/>
</dbReference>
<dbReference type="GO" id="GO:0000105">
    <property type="term" value="P:L-histidine biosynthetic process"/>
    <property type="evidence" value="ECO:0007669"/>
    <property type="project" value="UniProtKB-UniRule"/>
</dbReference>
<dbReference type="CDD" id="cd04731">
    <property type="entry name" value="HisF"/>
    <property type="match status" value="1"/>
</dbReference>
<dbReference type="FunFam" id="3.20.20.70:FF:000006">
    <property type="entry name" value="Imidazole glycerol phosphate synthase subunit HisF"/>
    <property type="match status" value="1"/>
</dbReference>
<dbReference type="Gene3D" id="3.20.20.70">
    <property type="entry name" value="Aldolase class I"/>
    <property type="match status" value="1"/>
</dbReference>
<dbReference type="HAMAP" id="MF_01013">
    <property type="entry name" value="HisF"/>
    <property type="match status" value="1"/>
</dbReference>
<dbReference type="InterPro" id="IPR013785">
    <property type="entry name" value="Aldolase_TIM"/>
</dbReference>
<dbReference type="InterPro" id="IPR006062">
    <property type="entry name" value="His_biosynth"/>
</dbReference>
<dbReference type="InterPro" id="IPR004651">
    <property type="entry name" value="HisF"/>
</dbReference>
<dbReference type="InterPro" id="IPR050064">
    <property type="entry name" value="IGPS_HisA/HisF"/>
</dbReference>
<dbReference type="InterPro" id="IPR011060">
    <property type="entry name" value="RibuloseP-bd_barrel"/>
</dbReference>
<dbReference type="NCBIfam" id="TIGR00735">
    <property type="entry name" value="hisF"/>
    <property type="match status" value="1"/>
</dbReference>
<dbReference type="PANTHER" id="PTHR21235:SF2">
    <property type="entry name" value="IMIDAZOLE GLYCEROL PHOSPHATE SYNTHASE HISHF"/>
    <property type="match status" value="1"/>
</dbReference>
<dbReference type="PANTHER" id="PTHR21235">
    <property type="entry name" value="IMIDAZOLE GLYCEROL PHOSPHATE SYNTHASE SUBUNIT HISF/H IGP SYNTHASE SUBUNIT HISF/H"/>
    <property type="match status" value="1"/>
</dbReference>
<dbReference type="Pfam" id="PF00977">
    <property type="entry name" value="His_biosynth"/>
    <property type="match status" value="1"/>
</dbReference>
<dbReference type="SUPFAM" id="SSF51366">
    <property type="entry name" value="Ribulose-phoshate binding barrel"/>
    <property type="match status" value="1"/>
</dbReference>
<gene>
    <name evidence="1" type="primary">hisF</name>
    <name type="ordered locus">Swit_2720</name>
</gene>
<keyword id="KW-0028">Amino-acid biosynthesis</keyword>
<keyword id="KW-0963">Cytoplasm</keyword>
<keyword id="KW-0368">Histidine biosynthesis</keyword>
<keyword id="KW-0456">Lyase</keyword>
<keyword id="KW-1185">Reference proteome</keyword>
<sequence>MTVRVRVIPCLDVAGGRVVKGVNFVDLADAGDPVEQARVYDAAGADELCFLDITASHEGRGTILDVVARTAAVCFMPLTVGGGVRSADDARALLLAGADKVAVNSAAVARPELCAEMAERFGAQCVVGAVDARAVGPGKWEIYTHGGRKPTGIDAVEHAKRLASLGAGEILLTSMDRDGTRDGYDLALTRAISDAVPVPVIASGGVGNLGHLVEGVTRGGASAVLAASIFHFGQHSVAEAHAALRAAGLPVRNG</sequence>
<feature type="chain" id="PRO_1000063158" description="Imidazole glycerol phosphate synthase subunit HisF">
    <location>
        <begin position="1"/>
        <end position="254"/>
    </location>
</feature>
<feature type="active site" evidence="1">
    <location>
        <position position="12"/>
    </location>
</feature>
<feature type="active site" evidence="1">
    <location>
        <position position="131"/>
    </location>
</feature>
<accession>A5V9W0</accession>
<evidence type="ECO:0000255" key="1">
    <source>
        <dbReference type="HAMAP-Rule" id="MF_01013"/>
    </source>
</evidence>
<name>HIS6_RHIWR</name>
<comment type="function">
    <text evidence="1">IGPS catalyzes the conversion of PRFAR and glutamine to IGP, AICAR and glutamate. The HisF subunit catalyzes the cyclization activity that produces IGP and AICAR from PRFAR using the ammonia provided by the HisH subunit.</text>
</comment>
<comment type="catalytic activity">
    <reaction evidence="1">
        <text>5-[(5-phospho-1-deoxy-D-ribulos-1-ylimino)methylamino]-1-(5-phospho-beta-D-ribosyl)imidazole-4-carboxamide + L-glutamine = D-erythro-1-(imidazol-4-yl)glycerol 3-phosphate + 5-amino-1-(5-phospho-beta-D-ribosyl)imidazole-4-carboxamide + L-glutamate + H(+)</text>
        <dbReference type="Rhea" id="RHEA:24793"/>
        <dbReference type="ChEBI" id="CHEBI:15378"/>
        <dbReference type="ChEBI" id="CHEBI:29985"/>
        <dbReference type="ChEBI" id="CHEBI:58278"/>
        <dbReference type="ChEBI" id="CHEBI:58359"/>
        <dbReference type="ChEBI" id="CHEBI:58475"/>
        <dbReference type="ChEBI" id="CHEBI:58525"/>
        <dbReference type="EC" id="4.3.2.10"/>
    </reaction>
</comment>
<comment type="pathway">
    <text evidence="1">Amino-acid biosynthesis; L-histidine biosynthesis; L-histidine from 5-phospho-alpha-D-ribose 1-diphosphate: step 5/9.</text>
</comment>
<comment type="subunit">
    <text evidence="1">Heterodimer of HisH and HisF.</text>
</comment>
<comment type="subcellular location">
    <subcellularLocation>
        <location evidence="1">Cytoplasm</location>
    </subcellularLocation>
</comment>
<comment type="similarity">
    <text evidence="1">Belongs to the HisA/HisF family.</text>
</comment>
<protein>
    <recommendedName>
        <fullName evidence="1">Imidazole glycerol phosphate synthase subunit HisF</fullName>
        <ecNumber evidence="1">4.3.2.10</ecNumber>
    </recommendedName>
    <alternativeName>
        <fullName evidence="1">IGP synthase cyclase subunit</fullName>
    </alternativeName>
    <alternativeName>
        <fullName evidence="1">IGP synthase subunit HisF</fullName>
    </alternativeName>
    <alternativeName>
        <fullName evidence="1">ImGP synthase subunit HisF</fullName>
        <shortName evidence="1">IGPS subunit HisF</shortName>
    </alternativeName>
</protein>
<proteinExistence type="inferred from homology"/>
<reference key="1">
    <citation type="journal article" date="2010" name="J. Bacteriol.">
        <title>Genome sequence of the dioxin-mineralizing bacterium Sphingomonas wittichii RW1.</title>
        <authorList>
            <person name="Miller T.R."/>
            <person name="Delcher A.L."/>
            <person name="Salzberg S.L."/>
            <person name="Saunders E."/>
            <person name="Detter J.C."/>
            <person name="Halden R.U."/>
        </authorList>
    </citation>
    <scope>NUCLEOTIDE SEQUENCE [LARGE SCALE GENOMIC DNA]</scope>
    <source>
        <strain>DSM 6014 / CCUG 31198 / JCM 15750 / NBRC 105917 / EY 4224 / RW1</strain>
    </source>
</reference>
<organism>
    <name type="scientific">Rhizorhabdus wittichii (strain DSM 6014 / CCUG 31198 / JCM 15750 / NBRC 105917 / EY 4224 / RW1)</name>
    <name type="common">Sphingomonas wittichii</name>
    <dbReference type="NCBI Taxonomy" id="392499"/>
    <lineage>
        <taxon>Bacteria</taxon>
        <taxon>Pseudomonadati</taxon>
        <taxon>Pseudomonadota</taxon>
        <taxon>Alphaproteobacteria</taxon>
        <taxon>Sphingomonadales</taxon>
        <taxon>Sphingomonadaceae</taxon>
        <taxon>Rhizorhabdus</taxon>
    </lineage>
</organism>